<keyword id="KW-1185">Reference proteome</keyword>
<feature type="chain" id="PRO_0000209459" description="DNA utilization protein YhgH">
    <location>
        <begin position="1"/>
        <end position="227"/>
    </location>
</feature>
<gene>
    <name type="primary">gntX</name>
    <name type="ordered locus">c4190</name>
</gene>
<comment type="function">
    <text evidence="1">Could be involved in gluconate metabolism.</text>
</comment>
<comment type="similarity">
    <text evidence="2">Belongs to the ComF/GntX family.</text>
</comment>
<comment type="sequence caution" evidence="2">
    <conflict type="erroneous initiation">
        <sequence resource="EMBL-CDS" id="AAN82628"/>
    </conflict>
    <text>Extended N-terminus.</text>
</comment>
<evidence type="ECO:0000250" key="1"/>
<evidence type="ECO:0000305" key="2"/>
<reference key="1">
    <citation type="journal article" date="2002" name="Proc. Natl. Acad. Sci. U.S.A.">
        <title>Extensive mosaic structure revealed by the complete genome sequence of uropathogenic Escherichia coli.</title>
        <authorList>
            <person name="Welch R.A."/>
            <person name="Burland V."/>
            <person name="Plunkett G. III"/>
            <person name="Redford P."/>
            <person name="Roesch P."/>
            <person name="Rasko D."/>
            <person name="Buckles E.L."/>
            <person name="Liou S.-R."/>
            <person name="Boutin A."/>
            <person name="Hackett J."/>
            <person name="Stroud D."/>
            <person name="Mayhew G.F."/>
            <person name="Rose D.J."/>
            <person name="Zhou S."/>
            <person name="Schwartz D.C."/>
            <person name="Perna N.T."/>
            <person name="Mobley H.L.T."/>
            <person name="Donnenberg M.S."/>
            <person name="Blattner F.R."/>
        </authorList>
    </citation>
    <scope>NUCLEOTIDE SEQUENCE [LARGE SCALE GENOMIC DNA]</scope>
    <source>
        <strain>CFT073 / ATCC 700928 / UPEC</strain>
    </source>
</reference>
<protein>
    <recommendedName>
        <fullName>DNA utilization protein YhgH</fullName>
    </recommendedName>
    <alternativeName>
        <fullName>Protein GntX</fullName>
    </alternativeName>
</protein>
<name>GNTX_ECOL6</name>
<dbReference type="EMBL" id="AE014075">
    <property type="protein sequence ID" value="AAN82628.1"/>
    <property type="status" value="ALT_INIT"/>
    <property type="molecule type" value="Genomic_DNA"/>
</dbReference>
<dbReference type="RefSeq" id="WP_001308099.1">
    <property type="nucleotide sequence ID" value="NZ_CP051263.1"/>
</dbReference>
<dbReference type="STRING" id="199310.c4190"/>
<dbReference type="KEGG" id="ecc:c4190"/>
<dbReference type="eggNOG" id="COG1040">
    <property type="taxonomic scope" value="Bacteria"/>
</dbReference>
<dbReference type="HOGENOM" id="CLU_054549_0_2_6"/>
<dbReference type="Proteomes" id="UP000001410">
    <property type="component" value="Chromosome"/>
</dbReference>
<dbReference type="CDD" id="cd06223">
    <property type="entry name" value="PRTases_typeI"/>
    <property type="match status" value="1"/>
</dbReference>
<dbReference type="FunFam" id="3.40.50.2020:FF:000054">
    <property type="entry name" value="ComF family protein"/>
    <property type="match status" value="1"/>
</dbReference>
<dbReference type="Gene3D" id="3.40.50.2020">
    <property type="match status" value="1"/>
</dbReference>
<dbReference type="InterPro" id="IPR051910">
    <property type="entry name" value="ComF/GntX_DNA_util-trans"/>
</dbReference>
<dbReference type="InterPro" id="IPR005222">
    <property type="entry name" value="Competence_ComF"/>
</dbReference>
<dbReference type="InterPro" id="IPR000836">
    <property type="entry name" value="PRibTrfase_dom"/>
</dbReference>
<dbReference type="InterPro" id="IPR029057">
    <property type="entry name" value="PRTase-like"/>
</dbReference>
<dbReference type="NCBIfam" id="TIGR00201">
    <property type="entry name" value="comF"/>
    <property type="match status" value="1"/>
</dbReference>
<dbReference type="NCBIfam" id="NF008616">
    <property type="entry name" value="PRK11595.1"/>
    <property type="match status" value="1"/>
</dbReference>
<dbReference type="PANTHER" id="PTHR47505">
    <property type="entry name" value="DNA UTILIZATION PROTEIN YHGH"/>
    <property type="match status" value="1"/>
</dbReference>
<dbReference type="PANTHER" id="PTHR47505:SF1">
    <property type="entry name" value="DNA UTILIZATION PROTEIN YHGH"/>
    <property type="match status" value="1"/>
</dbReference>
<dbReference type="Pfam" id="PF00156">
    <property type="entry name" value="Pribosyltran"/>
    <property type="match status" value="1"/>
</dbReference>
<dbReference type="SUPFAM" id="SSF53271">
    <property type="entry name" value="PRTase-like"/>
    <property type="match status" value="1"/>
</dbReference>
<organism>
    <name type="scientific">Escherichia coli O6:H1 (strain CFT073 / ATCC 700928 / UPEC)</name>
    <dbReference type="NCBI Taxonomy" id="199310"/>
    <lineage>
        <taxon>Bacteria</taxon>
        <taxon>Pseudomonadati</taxon>
        <taxon>Pseudomonadota</taxon>
        <taxon>Gammaproteobacteria</taxon>
        <taxon>Enterobacterales</taxon>
        <taxon>Enterobacteriaceae</taxon>
        <taxon>Escherichia</taxon>
    </lineage>
</organism>
<accession>Q8FCT3</accession>
<sequence>MLTVPGLCWLCRMPLALGHWGICSVCSRAARTDKTLCPQCGLPATHSHLPCGRCLQKPPPWQRLVTVADYAPPLSPLIHQLKFSRRSEIASALSRLLLLEVLHARRTTGLQLPDRIISVPLWQRRHWRRGFNQSDLLCQPLSRWLHCRWDSEAVTRTRATATQHFLSARLRKRNLKNAFRLELPVQGRHMVIVDDVVTTGSTVAEIAQLLLRNGAATVQVWCLCRTL</sequence>
<proteinExistence type="inferred from homology"/>